<accession>C1AI67</accession>
<dbReference type="EC" id="3.5.4.16" evidence="1"/>
<dbReference type="EMBL" id="AP010918">
    <property type="protein sequence ID" value="BAH27946.1"/>
    <property type="molecule type" value="Genomic_DNA"/>
</dbReference>
<dbReference type="RefSeq" id="WP_003899597.1">
    <property type="nucleotide sequence ID" value="NZ_CP014566.1"/>
</dbReference>
<dbReference type="SMR" id="C1AI67"/>
<dbReference type="GeneID" id="45427595"/>
<dbReference type="KEGG" id="mbt:JTY_3674"/>
<dbReference type="HOGENOM" id="CLU_049768_3_3_11"/>
<dbReference type="UniPathway" id="UPA00848">
    <property type="reaction ID" value="UER00151"/>
</dbReference>
<dbReference type="GO" id="GO:0005737">
    <property type="term" value="C:cytoplasm"/>
    <property type="evidence" value="ECO:0007669"/>
    <property type="project" value="TreeGrafter"/>
</dbReference>
<dbReference type="GO" id="GO:0005525">
    <property type="term" value="F:GTP binding"/>
    <property type="evidence" value="ECO:0007669"/>
    <property type="project" value="UniProtKB-KW"/>
</dbReference>
<dbReference type="GO" id="GO:0003934">
    <property type="term" value="F:GTP cyclohydrolase I activity"/>
    <property type="evidence" value="ECO:0007669"/>
    <property type="project" value="UniProtKB-UniRule"/>
</dbReference>
<dbReference type="GO" id="GO:0008270">
    <property type="term" value="F:zinc ion binding"/>
    <property type="evidence" value="ECO:0007669"/>
    <property type="project" value="UniProtKB-UniRule"/>
</dbReference>
<dbReference type="GO" id="GO:0006730">
    <property type="term" value="P:one-carbon metabolic process"/>
    <property type="evidence" value="ECO:0007669"/>
    <property type="project" value="UniProtKB-UniRule"/>
</dbReference>
<dbReference type="GO" id="GO:0006729">
    <property type="term" value="P:tetrahydrobiopterin biosynthetic process"/>
    <property type="evidence" value="ECO:0007669"/>
    <property type="project" value="TreeGrafter"/>
</dbReference>
<dbReference type="GO" id="GO:0046654">
    <property type="term" value="P:tetrahydrofolate biosynthetic process"/>
    <property type="evidence" value="ECO:0007669"/>
    <property type="project" value="UniProtKB-UniRule"/>
</dbReference>
<dbReference type="FunFam" id="1.10.286.10:FF:000001">
    <property type="entry name" value="GTP cyclohydrolase 1"/>
    <property type="match status" value="1"/>
</dbReference>
<dbReference type="FunFam" id="3.30.1130.10:FF:000001">
    <property type="entry name" value="GTP cyclohydrolase 1"/>
    <property type="match status" value="1"/>
</dbReference>
<dbReference type="Gene3D" id="1.10.286.10">
    <property type="match status" value="1"/>
</dbReference>
<dbReference type="Gene3D" id="3.30.1130.10">
    <property type="match status" value="1"/>
</dbReference>
<dbReference type="HAMAP" id="MF_00223">
    <property type="entry name" value="FolE"/>
    <property type="match status" value="1"/>
</dbReference>
<dbReference type="InterPro" id="IPR043133">
    <property type="entry name" value="GTP-CH-I_C/QueF"/>
</dbReference>
<dbReference type="InterPro" id="IPR043134">
    <property type="entry name" value="GTP-CH-I_N"/>
</dbReference>
<dbReference type="InterPro" id="IPR001474">
    <property type="entry name" value="GTP_CycHdrlase_I"/>
</dbReference>
<dbReference type="InterPro" id="IPR018234">
    <property type="entry name" value="GTP_CycHdrlase_I_CS"/>
</dbReference>
<dbReference type="InterPro" id="IPR020602">
    <property type="entry name" value="GTP_CycHdrlase_I_dom"/>
</dbReference>
<dbReference type="NCBIfam" id="TIGR00063">
    <property type="entry name" value="folE"/>
    <property type="match status" value="1"/>
</dbReference>
<dbReference type="NCBIfam" id="NF006825">
    <property type="entry name" value="PRK09347.1-2"/>
    <property type="match status" value="1"/>
</dbReference>
<dbReference type="NCBIfam" id="NF006826">
    <property type="entry name" value="PRK09347.1-3"/>
    <property type="match status" value="1"/>
</dbReference>
<dbReference type="PANTHER" id="PTHR11109:SF7">
    <property type="entry name" value="GTP CYCLOHYDROLASE 1"/>
    <property type="match status" value="1"/>
</dbReference>
<dbReference type="PANTHER" id="PTHR11109">
    <property type="entry name" value="GTP CYCLOHYDROLASE I"/>
    <property type="match status" value="1"/>
</dbReference>
<dbReference type="Pfam" id="PF01227">
    <property type="entry name" value="GTP_cyclohydroI"/>
    <property type="match status" value="1"/>
</dbReference>
<dbReference type="SUPFAM" id="SSF55620">
    <property type="entry name" value="Tetrahydrobiopterin biosynthesis enzymes-like"/>
    <property type="match status" value="1"/>
</dbReference>
<dbReference type="PROSITE" id="PS00859">
    <property type="entry name" value="GTP_CYCLOHYDROL_1_1"/>
    <property type="match status" value="1"/>
</dbReference>
<dbReference type="PROSITE" id="PS00860">
    <property type="entry name" value="GTP_CYCLOHYDROL_1_2"/>
    <property type="match status" value="1"/>
</dbReference>
<comment type="catalytic activity">
    <reaction evidence="1">
        <text>GTP + H2O = 7,8-dihydroneopterin 3'-triphosphate + formate + H(+)</text>
        <dbReference type="Rhea" id="RHEA:17473"/>
        <dbReference type="ChEBI" id="CHEBI:15377"/>
        <dbReference type="ChEBI" id="CHEBI:15378"/>
        <dbReference type="ChEBI" id="CHEBI:15740"/>
        <dbReference type="ChEBI" id="CHEBI:37565"/>
        <dbReference type="ChEBI" id="CHEBI:58462"/>
        <dbReference type="EC" id="3.5.4.16"/>
    </reaction>
</comment>
<comment type="pathway">
    <text evidence="1">Cofactor biosynthesis; 7,8-dihydroneopterin triphosphate biosynthesis; 7,8-dihydroneopterin triphosphate from GTP: step 1/1.</text>
</comment>
<comment type="subunit">
    <text evidence="1">Homomer.</text>
</comment>
<comment type="similarity">
    <text evidence="1">Belongs to the GTP cyclohydrolase I family.</text>
</comment>
<name>GCH1_MYCBT</name>
<organism>
    <name type="scientific">Mycobacterium bovis (strain BCG / Tokyo 172 / ATCC 35737 / TMC 1019)</name>
    <dbReference type="NCBI Taxonomy" id="561275"/>
    <lineage>
        <taxon>Bacteria</taxon>
        <taxon>Bacillati</taxon>
        <taxon>Actinomycetota</taxon>
        <taxon>Actinomycetes</taxon>
        <taxon>Mycobacteriales</taxon>
        <taxon>Mycobacteriaceae</taxon>
        <taxon>Mycobacterium</taxon>
        <taxon>Mycobacterium tuberculosis complex</taxon>
    </lineage>
</organism>
<reference key="1">
    <citation type="journal article" date="2009" name="Vaccine">
        <title>Whole genome sequence analysis of Mycobacterium bovis bacillus Calmette-Guerin (BCG) Tokyo 172: a comparative study of BCG vaccine substrains.</title>
        <authorList>
            <person name="Seki M."/>
            <person name="Honda I."/>
            <person name="Fujita I."/>
            <person name="Yano I."/>
            <person name="Yamamoto S."/>
            <person name="Koyama A."/>
        </authorList>
    </citation>
    <scope>NUCLEOTIDE SEQUENCE [LARGE SCALE GENOMIC DNA]</scope>
    <source>
        <strain>BCG / Tokyo 172 / ATCC 35737 / TMC 1019</strain>
    </source>
</reference>
<feature type="chain" id="PRO_1000124922" description="GTP cyclohydrolase 1">
    <location>
        <begin position="1"/>
        <end position="202"/>
    </location>
</feature>
<feature type="binding site" evidence="1">
    <location>
        <position position="90"/>
    </location>
    <ligand>
        <name>Zn(2+)</name>
        <dbReference type="ChEBI" id="CHEBI:29105"/>
    </ligand>
</feature>
<feature type="binding site" evidence="1">
    <location>
        <position position="93"/>
    </location>
    <ligand>
        <name>Zn(2+)</name>
        <dbReference type="ChEBI" id="CHEBI:29105"/>
    </ligand>
</feature>
<feature type="binding site" evidence="1">
    <location>
        <position position="163"/>
    </location>
    <ligand>
        <name>Zn(2+)</name>
        <dbReference type="ChEBI" id="CHEBI:29105"/>
    </ligand>
</feature>
<gene>
    <name evidence="1" type="primary">folE</name>
    <name type="ordered locus">JTY_3674</name>
</gene>
<protein>
    <recommendedName>
        <fullName evidence="1">GTP cyclohydrolase 1</fullName>
        <ecNumber evidence="1">3.5.4.16</ecNumber>
    </recommendedName>
    <alternativeName>
        <fullName evidence="1">GTP cyclohydrolase I</fullName>
        <shortName evidence="1">GTP-CH-I</shortName>
    </alternativeName>
</protein>
<proteinExistence type="inferred from homology"/>
<keyword id="KW-0342">GTP-binding</keyword>
<keyword id="KW-0378">Hydrolase</keyword>
<keyword id="KW-0479">Metal-binding</keyword>
<keyword id="KW-0547">Nucleotide-binding</keyword>
<keyword id="KW-0554">One-carbon metabolism</keyword>
<keyword id="KW-0862">Zinc</keyword>
<evidence type="ECO:0000255" key="1">
    <source>
        <dbReference type="HAMAP-Rule" id="MF_00223"/>
    </source>
</evidence>
<sequence length="202" mass="22395">MSQLDSRSASARIRVFDQQRAEAAVRELLYAIGEDPDRDGLVATPSRVARSYREMFAGLYTDPDSVLNTMFDEDHDELVLVKEIPMYSTCEHHLVAFHGVAHVGYIPGDDGRVTGLSKIARLVDLYAKRPQVQERLTSQIADALMKKLDPRGVIVVIEAEHLCMAMRGVRKPGSVTTTSAVRGLFKTNAASRAEALDLILRK</sequence>